<dbReference type="EMBL" id="V00633">
    <property type="protein sequence ID" value="CAA23906.1"/>
    <property type="molecule type" value="mRNA"/>
</dbReference>
<dbReference type="PIR" id="S06458">
    <property type="entry name" value="GCAF"/>
</dbReference>
<dbReference type="SMR" id="P01278"/>
<dbReference type="GO" id="GO:0005576">
    <property type="term" value="C:extracellular region"/>
    <property type="evidence" value="ECO:0007669"/>
    <property type="project" value="UniProtKB-SubCell"/>
</dbReference>
<dbReference type="GO" id="GO:0031769">
    <property type="term" value="F:glucagon receptor binding"/>
    <property type="evidence" value="ECO:0007669"/>
    <property type="project" value="TreeGrafter"/>
</dbReference>
<dbReference type="GO" id="GO:0005179">
    <property type="term" value="F:hormone activity"/>
    <property type="evidence" value="ECO:0007669"/>
    <property type="project" value="UniProtKB-KW"/>
</dbReference>
<dbReference type="GO" id="GO:0042594">
    <property type="term" value="P:response to starvation"/>
    <property type="evidence" value="ECO:0007669"/>
    <property type="project" value="TreeGrafter"/>
</dbReference>
<dbReference type="Gene3D" id="6.10.250.590">
    <property type="match status" value="2"/>
</dbReference>
<dbReference type="InterPro" id="IPR015550">
    <property type="entry name" value="Glucagon"/>
</dbReference>
<dbReference type="InterPro" id="IPR000532">
    <property type="entry name" value="Glucagon_GIP_secretin_VIP"/>
</dbReference>
<dbReference type="PANTHER" id="PTHR11418">
    <property type="entry name" value="GLUCAGON"/>
    <property type="match status" value="1"/>
</dbReference>
<dbReference type="PANTHER" id="PTHR11418:SF0">
    <property type="entry name" value="PRO-GLUCAGON"/>
    <property type="match status" value="1"/>
</dbReference>
<dbReference type="Pfam" id="PF00123">
    <property type="entry name" value="Hormone_2"/>
    <property type="match status" value="2"/>
</dbReference>
<dbReference type="PRINTS" id="PR00275">
    <property type="entry name" value="GLUCAGON"/>
</dbReference>
<dbReference type="SMART" id="SM00070">
    <property type="entry name" value="GLUCA"/>
    <property type="match status" value="2"/>
</dbReference>
<dbReference type="PROSITE" id="PS00260">
    <property type="entry name" value="GLUCAGON"/>
    <property type="match status" value="2"/>
</dbReference>
<feature type="signal peptide" evidence="2">
    <location>
        <begin position="1"/>
        <end position="25"/>
    </location>
</feature>
<feature type="peptide" id="PRO_0000011343" description="Glicentin-related polypeptide" evidence="1">
    <location>
        <begin position="26"/>
        <end position="50"/>
    </location>
</feature>
<feature type="peptide" id="PRO_0000011344" description="Glucagon-1">
    <location>
        <begin position="53"/>
        <end position="81"/>
    </location>
</feature>
<feature type="propeptide" id="PRO_0000011345" evidence="1">
    <location>
        <begin position="84"/>
        <end position="88"/>
    </location>
</feature>
<feature type="peptide" id="PRO_0000011346" description="Glucagon-like peptide 1" evidence="1">
    <location>
        <begin position="91"/>
        <end position="124"/>
    </location>
</feature>
<feature type="region of interest" description="Disordered" evidence="3">
    <location>
        <begin position="28"/>
        <end position="54"/>
    </location>
</feature>
<feature type="compositionally biased region" description="Basic and acidic residues" evidence="3">
    <location>
        <begin position="38"/>
        <end position="54"/>
    </location>
</feature>
<gene>
    <name type="primary">gcg1</name>
</gene>
<organism>
    <name type="scientific">Lophius americanus</name>
    <name type="common">American angler</name>
    <name type="synonym">Anglerfish</name>
    <dbReference type="NCBI Taxonomy" id="8073"/>
    <lineage>
        <taxon>Eukaryota</taxon>
        <taxon>Metazoa</taxon>
        <taxon>Chordata</taxon>
        <taxon>Craniata</taxon>
        <taxon>Vertebrata</taxon>
        <taxon>Euteleostomi</taxon>
        <taxon>Actinopterygii</taxon>
        <taxon>Neopterygii</taxon>
        <taxon>Teleostei</taxon>
        <taxon>Neoteleostei</taxon>
        <taxon>Acanthomorphata</taxon>
        <taxon>Eupercaria</taxon>
        <taxon>Lophiiformes</taxon>
        <taxon>Lophiidae</taxon>
        <taxon>Lophius</taxon>
    </lineage>
</organism>
<accession>P01278</accession>
<name>GLUC1_LOPAM</name>
<evidence type="ECO:0000250" key="1"/>
<evidence type="ECO:0000255" key="2"/>
<evidence type="ECO:0000256" key="3">
    <source>
        <dbReference type="SAM" id="MobiDB-lite"/>
    </source>
</evidence>
<evidence type="ECO:0000305" key="4"/>
<reference key="1">
    <citation type="journal article" date="1982" name="Proc. Natl. Acad. Sci. U.S.A.">
        <title>Pancreatic preproglucagon cDNA contains two glucagon-related coding sequences arranged in tandem.</title>
        <authorList>
            <person name="Lund P.K."/>
            <person name="Goodman R.H."/>
            <person name="Dee P.C."/>
            <person name="Habener J.F."/>
        </authorList>
    </citation>
    <scope>NUCLEOTIDE SEQUENCE [MRNA]</scope>
</reference>
<reference key="2">
    <citation type="journal article" date="1981" name="J. Biol. Chem.">
        <title>Pancreatic pre-proglucagons are encoded by two separate mRNAs.</title>
        <authorList>
            <person name="Lund P.K."/>
            <person name="Goodman R.H."/>
            <person name="Habener J.F."/>
        </authorList>
    </citation>
    <scope>NUCLEOTIDE SEQUENCE [MRNA] OF 51-83</scope>
</reference>
<reference key="3">
    <citation type="journal article" date="1988" name="Endocrinology">
        <title>Pancreatic proglucagon processing: isolation and structures of glucagon and glucagon-like peptide from gene I.</title>
        <authorList>
            <person name="Nichols R."/>
            <person name="Lee T.D."/>
            <person name="Andrews P.C."/>
        </authorList>
    </citation>
    <scope>PROTEIN SEQUENCE OF 53-81 AND 91-124</scope>
</reference>
<comment type="function">
    <text>Glucagon plays a key role in glucose metabolism and homeostasis. Regulates blood glucose by increasing gluconeogenesis and decreasing glycolysis.</text>
</comment>
<comment type="subcellular location">
    <subcellularLocation>
        <location>Secreted</location>
    </subcellularLocation>
</comment>
<comment type="induction">
    <text>Produced in the A cells of the islets of Langerhans in response to a drop in blood sugar concentration.</text>
</comment>
<comment type="similarity">
    <text evidence="4">Belongs to the glucagon family.</text>
</comment>
<sequence>MKRIHSLAGILLVLGLIQSSCRVLMQEADPSSSLEADSTLKDEPRELSNMKRHSEGTFSNDYSKYLEDRKAQEFVRWLMNNKRSGVAEKRHADGTFTSDVSSYLKDQAIKDFVDRLKAGQVRRE</sequence>
<protein>
    <recommendedName>
        <fullName>Glucagon-1</fullName>
    </recommendedName>
    <alternativeName>
        <fullName>Glucagon I</fullName>
    </alternativeName>
    <component>
        <recommendedName>
            <fullName>Glicentin-related polypeptide</fullName>
            <shortName>GRPP</shortName>
        </recommendedName>
    </component>
    <component>
        <recommendedName>
            <fullName>Glucagon-1</fullName>
        </recommendedName>
        <alternativeName>
            <fullName>Glucagon I</fullName>
        </alternativeName>
    </component>
    <component>
        <recommendedName>
            <fullName>Glucagon-like peptide 1</fullName>
        </recommendedName>
        <alternativeName>
            <fullName>Glucagon-like peptide I</fullName>
        </alternativeName>
    </component>
</protein>
<keyword id="KW-0165">Cleavage on pair of basic residues</keyword>
<keyword id="KW-0903">Direct protein sequencing</keyword>
<keyword id="KW-0372">Hormone</keyword>
<keyword id="KW-0964">Secreted</keyword>
<keyword id="KW-0732">Signal</keyword>
<proteinExistence type="evidence at protein level"/>